<protein>
    <recommendedName>
        <fullName evidence="1">Kappa-scoloptoxin(07)-Ssm2d</fullName>
        <shortName evidence="1">Kappa-SLPTX(07)-Ssm2d</shortName>
    </recommendedName>
    <alternativeName>
        <fullName evidence="3">Kappa-scoloptoxin-Ssm2d</fullName>
        <shortName evidence="3">Kappa-SLPTX-Ssm2d</shortName>
    </alternativeName>
</protein>
<evidence type="ECO:0000250" key="1">
    <source>
        <dbReference type="UniProtKB" id="I6RA66"/>
    </source>
</evidence>
<evidence type="ECO:0000255" key="2"/>
<evidence type="ECO:0000303" key="3">
    <source>
    </source>
</evidence>
<evidence type="ECO:0000305" key="4"/>
<evidence type="ECO:0000305" key="5">
    <source>
    </source>
</evidence>
<reference key="1">
    <citation type="journal article" date="2012" name="Mol. Cell. Proteomics">
        <title>Chemical punch packed in venoms makes centipedes excellent predators.</title>
        <authorList>
            <person name="Yang S."/>
            <person name="Liu Z."/>
            <person name="Xiao Y."/>
            <person name="Li Y."/>
            <person name="Rong M."/>
            <person name="Liang S."/>
            <person name="Zhang Z."/>
            <person name="Yu H."/>
            <person name="King G.F."/>
            <person name="Lai R."/>
        </authorList>
    </citation>
    <scope>NUCLEOTIDE SEQUENCE [MRNA]</scope>
    <source>
        <tissue>Venom gland</tissue>
    </source>
</reference>
<comment type="function">
    <text evidence="1">Inhibits voltage-gated potassium channels.</text>
</comment>
<comment type="subcellular location">
    <subcellularLocation>
        <location evidence="5">Secreted</location>
    </subcellularLocation>
</comment>
<comment type="tissue specificity">
    <text evidence="5">Expressed by the venom gland.</text>
</comment>
<comment type="PTM">
    <text evidence="4">Contains 3 disulfide bonds.</text>
</comment>
<comment type="similarity">
    <text evidence="4">Belongs to the scoloptoxin-07 family.</text>
</comment>
<comment type="sequence caution" evidence="4">
    <conflict type="erroneous initiation">
        <sequence resource="EMBL-CDS" id="AFM55012"/>
    </conflict>
    <text>Extended N-terminus.</text>
</comment>
<keyword id="KW-0165">Cleavage on pair of basic residues</keyword>
<keyword id="KW-1015">Disulfide bond</keyword>
<keyword id="KW-0872">Ion channel impairing toxin</keyword>
<keyword id="KW-0528">Neurotoxin</keyword>
<keyword id="KW-0632">Potassium channel impairing toxin</keyword>
<keyword id="KW-0964">Secreted</keyword>
<keyword id="KW-0732">Signal</keyword>
<keyword id="KW-0800">Toxin</keyword>
<keyword id="KW-1220">Voltage-gated potassium channel impairing toxin</keyword>
<dbReference type="EMBL" id="JQ757065">
    <property type="protein sequence ID" value="AFM55012.1"/>
    <property type="status" value="ALT_INIT"/>
    <property type="molecule type" value="mRNA"/>
</dbReference>
<dbReference type="GO" id="GO:0005576">
    <property type="term" value="C:extracellular region"/>
    <property type="evidence" value="ECO:0007669"/>
    <property type="project" value="UniProtKB-SubCell"/>
</dbReference>
<dbReference type="GO" id="GO:0015459">
    <property type="term" value="F:potassium channel regulator activity"/>
    <property type="evidence" value="ECO:0007669"/>
    <property type="project" value="UniProtKB-KW"/>
</dbReference>
<dbReference type="GO" id="GO:0090729">
    <property type="term" value="F:toxin activity"/>
    <property type="evidence" value="ECO:0007669"/>
    <property type="project" value="UniProtKB-KW"/>
</dbReference>
<sequence length="74" mass="8288">MLVFYALLFVTVFSNTVMGATIDKPIPKPILREAIEEIEVNKRADSHYCKEENCPPGKHCPEVPIACVYGPCCF</sequence>
<proteinExistence type="inferred from homology"/>
<organism>
    <name type="scientific">Scolopendra mutilans</name>
    <name type="common">Chinese red-headed centipede</name>
    <name type="synonym">Scolopendra subspinipes mutilans</name>
    <dbReference type="NCBI Taxonomy" id="2836329"/>
    <lineage>
        <taxon>Eukaryota</taxon>
        <taxon>Metazoa</taxon>
        <taxon>Ecdysozoa</taxon>
        <taxon>Arthropoda</taxon>
        <taxon>Myriapoda</taxon>
        <taxon>Chilopoda</taxon>
        <taxon>Pleurostigmophora</taxon>
        <taxon>Scolopendromorpha</taxon>
        <taxon>Scolopendridae</taxon>
        <taxon>Scolopendra</taxon>
    </lineage>
</organism>
<name>TX72D_SCOMU</name>
<accession>I6S394</accession>
<feature type="signal peptide" evidence="2">
    <location>
        <begin position="1"/>
        <end position="19"/>
    </location>
</feature>
<feature type="propeptide" id="PRO_0000425479" evidence="1">
    <location>
        <begin position="20"/>
        <end position="41"/>
    </location>
</feature>
<feature type="chain" id="PRO_0000425480" description="Kappa-scoloptoxin(07)-Ssm2d" evidence="1">
    <location>
        <begin position="44"/>
        <end position="74"/>
    </location>
</feature>
<feature type="sequence conflict" description="In Ref. 1; AFM55012." evidence="4" ref="1">
    <original>L</original>
    <variation>I</variation>
    <location>
        <position position="7"/>
    </location>
</feature>